<proteinExistence type="evidence at protein level"/>
<protein>
    <recommendedName>
        <fullName>Xylose isomerase</fullName>
        <ecNumber>5.3.1.5</ecNumber>
    </recommendedName>
</protein>
<organism>
    <name type="scientific">Arthrobacter sp. (strain NRRL B3728)</name>
    <dbReference type="NCBI Taxonomy" id="1669"/>
    <lineage>
        <taxon>Bacteria</taxon>
        <taxon>Bacillati</taxon>
        <taxon>Actinomycetota</taxon>
        <taxon>Actinomycetes</taxon>
        <taxon>Micrococcales</taxon>
        <taxon>Micrococcaceae</taxon>
        <taxon>Arthrobacter</taxon>
    </lineage>
</organism>
<name>XYLA_ARTS7</name>
<sequence>MSVQPTPADHFTFGLWTVGWTGADPFGVATRKNLDPVEAVHKLAELGAYGITFHDNDLIPFDATEAEREKILGDFNQALKDTGLKVPMVTTNLFSHPVFKDGGFTSNDRSIRRFALAKVLHNIDLAAEMGAETFVMWGGREGSEYDGSKDLAAALDRMREGVDTAAGYIKDKGYNLRIALEPKPNEPRGDIFLPTVGHGLAFIEQLEHGDIVGLNPETGHEQMAGLNFTHGIAQALWAEKLFHIDLNGQRGIKYDQDLVFGHGDLTSAFFTVDLLENGFPNGGPKYTGPRHFDYKPSRTDGYDGVWDSAKANMSMYLLLKERALAFRADPEVQEAMKTSGVFELGETTLNAGESAADLMNDSASFAGFDAEAAAERNFAFIRLNQLAIEHLLGSR</sequence>
<feature type="initiator methionine" description="Removed" evidence="1">
    <location>
        <position position="1"/>
    </location>
</feature>
<feature type="chain" id="PRO_0000195760" description="Xylose isomerase">
    <location>
        <begin position="2"/>
        <end position="395"/>
    </location>
</feature>
<feature type="active site" evidence="2">
    <location>
        <position position="54"/>
    </location>
</feature>
<feature type="active site" evidence="2">
    <location>
        <position position="57"/>
    </location>
</feature>
<feature type="binding site">
    <location>
        <position position="181"/>
    </location>
    <ligand>
        <name>Mg(2+)</name>
        <dbReference type="ChEBI" id="CHEBI:18420"/>
        <label>1</label>
    </ligand>
</feature>
<feature type="binding site">
    <location>
        <position position="217"/>
    </location>
    <ligand>
        <name>Mg(2+)</name>
        <dbReference type="ChEBI" id="CHEBI:18420"/>
        <label>1</label>
    </ligand>
</feature>
<feature type="binding site">
    <location>
        <position position="217"/>
    </location>
    <ligand>
        <name>Mg(2+)</name>
        <dbReference type="ChEBI" id="CHEBI:18420"/>
        <label>2</label>
    </ligand>
</feature>
<feature type="binding site">
    <location>
        <position position="220"/>
    </location>
    <ligand>
        <name>Mg(2+)</name>
        <dbReference type="ChEBI" id="CHEBI:18420"/>
        <label>2</label>
    </ligand>
</feature>
<feature type="binding site">
    <location>
        <position position="245"/>
    </location>
    <ligand>
        <name>Mg(2+)</name>
        <dbReference type="ChEBI" id="CHEBI:18420"/>
        <label>1</label>
    </ligand>
</feature>
<feature type="binding site">
    <location>
        <position position="255"/>
    </location>
    <ligand>
        <name>Mg(2+)</name>
        <dbReference type="ChEBI" id="CHEBI:18420"/>
        <label>2</label>
    </ligand>
</feature>
<feature type="binding site">
    <location>
        <position position="257"/>
    </location>
    <ligand>
        <name>Mg(2+)</name>
        <dbReference type="ChEBI" id="CHEBI:18420"/>
        <label>2</label>
    </ligand>
</feature>
<feature type="binding site">
    <location>
        <position position="293"/>
    </location>
    <ligand>
        <name>Mg(2+)</name>
        <dbReference type="ChEBI" id="CHEBI:18420"/>
        <label>1</label>
    </ligand>
</feature>
<feature type="helix" evidence="4">
    <location>
        <begin position="7"/>
        <end position="9"/>
    </location>
</feature>
<feature type="strand" evidence="4">
    <location>
        <begin position="11"/>
        <end position="14"/>
    </location>
</feature>
<feature type="helix" evidence="4">
    <location>
        <begin position="15"/>
        <end position="18"/>
    </location>
</feature>
<feature type="helix" evidence="4">
    <location>
        <begin position="36"/>
        <end position="46"/>
    </location>
</feature>
<feature type="strand" evidence="4">
    <location>
        <begin position="50"/>
        <end position="54"/>
    </location>
</feature>
<feature type="helix" evidence="4">
    <location>
        <begin position="55"/>
        <end position="58"/>
    </location>
</feature>
<feature type="helix" evidence="4">
    <location>
        <begin position="65"/>
        <end position="82"/>
    </location>
</feature>
<feature type="strand" evidence="4">
    <location>
        <begin position="88"/>
        <end position="90"/>
    </location>
</feature>
<feature type="strand" evidence="4">
    <location>
        <begin position="94"/>
        <end position="96"/>
    </location>
</feature>
<feature type="helix" evidence="4">
    <location>
        <begin position="97"/>
        <end position="99"/>
    </location>
</feature>
<feature type="helix" evidence="4">
    <location>
        <begin position="109"/>
        <end position="128"/>
    </location>
</feature>
<feature type="strand" evidence="4">
    <location>
        <begin position="132"/>
        <end position="136"/>
    </location>
</feature>
<feature type="strand" evidence="4">
    <location>
        <begin position="142"/>
        <end position="145"/>
    </location>
</feature>
<feature type="helix" evidence="4">
    <location>
        <begin position="146"/>
        <end position="148"/>
    </location>
</feature>
<feature type="helix" evidence="4">
    <location>
        <begin position="151"/>
        <end position="172"/>
    </location>
</feature>
<feature type="strand" evidence="4">
    <location>
        <begin position="177"/>
        <end position="180"/>
    </location>
</feature>
<feature type="strand" evidence="4">
    <location>
        <begin position="184"/>
        <end position="193"/>
    </location>
</feature>
<feature type="helix" evidence="4">
    <location>
        <begin position="196"/>
        <end position="203"/>
    </location>
</feature>
<feature type="helix" evidence="4">
    <location>
        <begin position="209"/>
        <end position="211"/>
    </location>
</feature>
<feature type="strand" evidence="4">
    <location>
        <begin position="212"/>
        <end position="214"/>
    </location>
</feature>
<feature type="helix" evidence="4">
    <location>
        <begin position="218"/>
        <end position="222"/>
    </location>
</feature>
<feature type="turn" evidence="4">
    <location>
        <begin position="223"/>
        <end position="225"/>
    </location>
</feature>
<feature type="helix" evidence="4">
    <location>
        <begin position="228"/>
        <end position="237"/>
    </location>
</feature>
<feature type="strand" evidence="4">
    <location>
        <begin position="251"/>
        <end position="254"/>
    </location>
</feature>
<feature type="helix" evidence="4">
    <location>
        <begin position="265"/>
        <end position="277"/>
    </location>
</feature>
<feature type="strand" evidence="4">
    <location>
        <begin position="290"/>
        <end position="292"/>
    </location>
</feature>
<feature type="helix" evidence="4">
    <location>
        <begin position="302"/>
        <end position="328"/>
    </location>
</feature>
<feature type="helix" evidence="4">
    <location>
        <begin position="330"/>
        <end position="338"/>
    </location>
</feature>
<feature type="turn" evidence="4">
    <location>
        <begin position="339"/>
        <end position="342"/>
    </location>
</feature>
<feature type="helix" evidence="4">
    <location>
        <begin position="343"/>
        <end position="345"/>
    </location>
</feature>
<feature type="helix" evidence="4">
    <location>
        <begin position="355"/>
        <end position="360"/>
    </location>
</feature>
<feature type="turn" evidence="4">
    <location>
        <begin position="362"/>
        <end position="367"/>
    </location>
</feature>
<feature type="helix" evidence="4">
    <location>
        <begin position="370"/>
        <end position="373"/>
    </location>
</feature>
<feature type="helix" evidence="4">
    <location>
        <begin position="380"/>
        <end position="391"/>
    </location>
</feature>
<evidence type="ECO:0000269" key="1">
    <source>
    </source>
</evidence>
<evidence type="ECO:0000269" key="2">
    <source>
    </source>
</evidence>
<evidence type="ECO:0000305" key="3"/>
<evidence type="ECO:0007829" key="4">
    <source>
        <dbReference type="PDB" id="1XLA"/>
    </source>
</evidence>
<accession>P12070</accession>
<dbReference type="EC" id="5.3.1.5"/>
<dbReference type="EMBL" id="X59466">
    <property type="protein sequence ID" value="CAA42073.1"/>
    <property type="molecule type" value="Genomic_DNA"/>
</dbReference>
<dbReference type="PIR" id="S16214">
    <property type="entry name" value="S16214"/>
</dbReference>
<dbReference type="PDB" id="1DID">
    <property type="method" value="X-ray"/>
    <property type="resolution" value="2.50 A"/>
    <property type="chains" value="A/B=2-395"/>
</dbReference>
<dbReference type="PDB" id="1DIE">
    <property type="method" value="X-ray"/>
    <property type="resolution" value="2.50 A"/>
    <property type="chains" value="A/B=2-395"/>
</dbReference>
<dbReference type="PDB" id="1XLA">
    <property type="method" value="X-ray"/>
    <property type="resolution" value="2.30 A"/>
    <property type="chains" value="A/B=2-395"/>
</dbReference>
<dbReference type="PDB" id="1XLB">
    <property type="method" value="X-ray"/>
    <property type="resolution" value="2.50 A"/>
    <property type="chains" value="A/B=2-395"/>
</dbReference>
<dbReference type="PDB" id="1XLC">
    <property type="method" value="X-ray"/>
    <property type="resolution" value="2.50 A"/>
    <property type="chains" value="A/B=2-395"/>
</dbReference>
<dbReference type="PDB" id="1XLD">
    <property type="method" value="X-ray"/>
    <property type="resolution" value="2.50 A"/>
    <property type="chains" value="A/B=2-395"/>
</dbReference>
<dbReference type="PDB" id="1XLE">
    <property type="method" value="X-ray"/>
    <property type="resolution" value="2.50 A"/>
    <property type="chains" value="A/B=2-395"/>
</dbReference>
<dbReference type="PDB" id="1XLF">
    <property type="method" value="X-ray"/>
    <property type="resolution" value="2.50 A"/>
    <property type="chains" value="A/B=2-395"/>
</dbReference>
<dbReference type="PDB" id="1XLG">
    <property type="method" value="X-ray"/>
    <property type="resolution" value="2.50 A"/>
    <property type="chains" value="A/B=2-395"/>
</dbReference>
<dbReference type="PDB" id="1XLH">
    <property type="method" value="X-ray"/>
    <property type="resolution" value="2.50 A"/>
    <property type="chains" value="A/B=2-395"/>
</dbReference>
<dbReference type="PDB" id="1XLI">
    <property type="method" value="X-ray"/>
    <property type="resolution" value="2.50 A"/>
    <property type="chains" value="A/B=2-395"/>
</dbReference>
<dbReference type="PDB" id="1XLJ">
    <property type="method" value="X-ray"/>
    <property type="resolution" value="2.50 A"/>
    <property type="chains" value="A/B=2-395"/>
</dbReference>
<dbReference type="PDB" id="1XLK">
    <property type="method" value="X-ray"/>
    <property type="resolution" value="2.50 A"/>
    <property type="chains" value="A/B=2-395"/>
</dbReference>
<dbReference type="PDB" id="1XLL">
    <property type="method" value="X-ray"/>
    <property type="resolution" value="2.50 A"/>
    <property type="chains" value="A/B=2-395"/>
</dbReference>
<dbReference type="PDB" id="1XLM">
    <property type="method" value="X-ray"/>
    <property type="resolution" value="2.40 A"/>
    <property type="chains" value="A/B=2-395"/>
</dbReference>
<dbReference type="PDB" id="4XIA">
    <property type="method" value="X-ray"/>
    <property type="resolution" value="2.30 A"/>
    <property type="chains" value="A/B=3-395"/>
</dbReference>
<dbReference type="PDB" id="5XIA">
    <property type="method" value="X-ray"/>
    <property type="resolution" value="2.50 A"/>
    <property type="chains" value="A/B=3-395"/>
</dbReference>
<dbReference type="PDBsum" id="1DID"/>
<dbReference type="PDBsum" id="1DIE"/>
<dbReference type="PDBsum" id="1XLA"/>
<dbReference type="PDBsum" id="1XLB"/>
<dbReference type="PDBsum" id="1XLC"/>
<dbReference type="PDBsum" id="1XLD"/>
<dbReference type="PDBsum" id="1XLE"/>
<dbReference type="PDBsum" id="1XLF"/>
<dbReference type="PDBsum" id="1XLG"/>
<dbReference type="PDBsum" id="1XLH"/>
<dbReference type="PDBsum" id="1XLI"/>
<dbReference type="PDBsum" id="1XLJ"/>
<dbReference type="PDBsum" id="1XLK"/>
<dbReference type="PDBsum" id="1XLL"/>
<dbReference type="PDBsum" id="1XLM"/>
<dbReference type="PDBsum" id="4XIA"/>
<dbReference type="PDBsum" id="5XIA"/>
<dbReference type="SMR" id="P12070"/>
<dbReference type="DrugBank" id="DB02172">
    <property type="generic name" value="2,5-Dideoxy-2,5-Imino-D-Glucitol"/>
</dbReference>
<dbReference type="DrugBank" id="DB03206">
    <property type="generic name" value="Duvoglustat"/>
</dbReference>
<dbReference type="DrugBank" id="DB11195">
    <property type="generic name" value="Xylitol"/>
</dbReference>
<dbReference type="SABIO-RK" id="P12070"/>
<dbReference type="EvolutionaryTrace" id="P12070"/>
<dbReference type="GO" id="GO:0005737">
    <property type="term" value="C:cytoplasm"/>
    <property type="evidence" value="ECO:0007669"/>
    <property type="project" value="UniProtKB-SubCell"/>
</dbReference>
<dbReference type="GO" id="GO:0000287">
    <property type="term" value="F:magnesium ion binding"/>
    <property type="evidence" value="ECO:0007669"/>
    <property type="project" value="UniProtKB-UniRule"/>
</dbReference>
<dbReference type="GO" id="GO:0009045">
    <property type="term" value="F:xylose isomerase activity"/>
    <property type="evidence" value="ECO:0007669"/>
    <property type="project" value="UniProtKB-UniRule"/>
</dbReference>
<dbReference type="GO" id="GO:0042732">
    <property type="term" value="P:D-xylose metabolic process"/>
    <property type="evidence" value="ECO:0007669"/>
    <property type="project" value="UniProtKB-UniRule"/>
</dbReference>
<dbReference type="Gene3D" id="3.20.20.150">
    <property type="entry name" value="Divalent-metal-dependent TIM barrel enzymes"/>
    <property type="match status" value="1"/>
</dbReference>
<dbReference type="HAMAP" id="MF_00455">
    <property type="entry name" value="Xylose_isom_A"/>
    <property type="match status" value="1"/>
</dbReference>
<dbReference type="InterPro" id="IPR036237">
    <property type="entry name" value="Xyl_isomerase-like_sf"/>
</dbReference>
<dbReference type="InterPro" id="IPR013022">
    <property type="entry name" value="Xyl_isomerase-like_TIM-brl"/>
</dbReference>
<dbReference type="InterPro" id="IPR013453">
    <property type="entry name" value="XylA_actinobac"/>
</dbReference>
<dbReference type="InterPro" id="IPR001998">
    <property type="entry name" value="Xylose_isomerase"/>
</dbReference>
<dbReference type="NCBIfam" id="TIGR02631">
    <property type="entry name" value="xylA_Arthro"/>
    <property type="match status" value="1"/>
</dbReference>
<dbReference type="PANTHER" id="PTHR48408">
    <property type="match status" value="1"/>
</dbReference>
<dbReference type="PANTHER" id="PTHR48408:SF1">
    <property type="entry name" value="XYLOSE ISOMERASE"/>
    <property type="match status" value="1"/>
</dbReference>
<dbReference type="Pfam" id="PF01261">
    <property type="entry name" value="AP_endonuc_2"/>
    <property type="match status" value="1"/>
</dbReference>
<dbReference type="PRINTS" id="PR00688">
    <property type="entry name" value="XYLOSISMRASE"/>
</dbReference>
<dbReference type="SUPFAM" id="SSF51658">
    <property type="entry name" value="Xylose isomerase-like"/>
    <property type="match status" value="1"/>
</dbReference>
<dbReference type="PROSITE" id="PS51415">
    <property type="entry name" value="XYLOSE_ISOMERASE"/>
    <property type="match status" value="1"/>
</dbReference>
<reference key="1">
    <citation type="journal article" date="1991" name="Biochem. J.">
        <title>D-xylose (D-glucose) isomerase from Arthrobacter strain N.R.R.L. B3728. Gene cloning, sequence and expression.</title>
        <authorList>
            <person name="Loviny-Anderton T."/>
            <person name="Shaw P.C."/>
            <person name="Shin M.K."/>
            <person name="Hartley B.S."/>
        </authorList>
    </citation>
    <scope>NUCLEOTIDE SEQUENCE [GENOMIC DNA]</scope>
</reference>
<reference key="2">
    <citation type="journal article" date="1991" name="Biochem. J.">
        <title>D-xylose (D-glucose) isomerase from Arthrobacter strain N.R.R.L. B3728. Purification and properties.</title>
        <authorList>
            <person name="Smith C.A."/>
            <person name="Rangarajan M."/>
            <person name="Hartley B.S."/>
        </authorList>
    </citation>
    <scope>PROTEIN SEQUENCE OF 2-21</scope>
    <scope>CHARACTERIZATION</scope>
</reference>
<reference key="3">
    <citation type="journal article" date="1990" name="J. Mol. Biol.">
        <title>Mechanism for aldose-ketose interconversion by D-xylose isomerase involving ring opening followed by a 1,2-hydride shift.</title>
        <authorList>
            <person name="Collyer C.A."/>
            <person name="Henrick K."/>
            <person name="Blow D.M."/>
        </authorList>
    </citation>
    <scope>ACTIVE SITES HIS-54 AND ASP-57</scope>
</reference>
<reference key="4">
    <citation type="journal article" date="1989" name="J. Mol. Biol.">
        <title>Structures of D-xylose isomerase from Arthrobacter strain B3728 containing the inhibitors xylitol and D-sorbitol at 2.5-A and 2.3-A resolution, respectively.</title>
        <authorList>
            <person name="Henrick K."/>
            <person name="Collyer C.A."/>
            <person name="Blow D.M."/>
        </authorList>
    </citation>
    <scope>X-RAY CRYSTALLOGRAPHY (2.3 ANGSTROMS)</scope>
</reference>
<reference key="5">
    <citation type="journal article" date="1987" name="Protein Eng.">
        <title>Comparison of backbone structures of glucose isomerase from Streptomyces and Arthrobacter.</title>
        <authorList>
            <person name="Henrick K."/>
            <person name="Blow D.M."/>
            <person name="Carell H.L."/>
            <person name="Glusker J.P."/>
        </authorList>
    </citation>
    <scope>COMPARISON OF X-RAY STRUCTURES</scope>
</reference>
<gene>
    <name type="primary">xylA</name>
</gene>
<comment type="catalytic activity">
    <reaction>
        <text>alpha-D-xylose = alpha-D-xylulofuranose</text>
        <dbReference type="Rhea" id="RHEA:22816"/>
        <dbReference type="ChEBI" id="CHEBI:28518"/>
        <dbReference type="ChEBI" id="CHEBI:188998"/>
        <dbReference type="EC" id="5.3.1.5"/>
    </reaction>
</comment>
<comment type="cofactor">
    <cofactor>
        <name>Mg(2+)</name>
        <dbReference type="ChEBI" id="CHEBI:18420"/>
    </cofactor>
    <text>Binds 2 magnesium ions per subunit.</text>
</comment>
<comment type="subunit">
    <text>Homotetramer.</text>
</comment>
<comment type="subcellular location">
    <subcellularLocation>
        <location>Cytoplasm</location>
    </subcellularLocation>
</comment>
<comment type="similarity">
    <text evidence="3">Belongs to the xylose isomerase family.</text>
</comment>
<keyword id="KW-0002">3D-structure</keyword>
<keyword id="KW-0119">Carbohydrate metabolism</keyword>
<keyword id="KW-0963">Cytoplasm</keyword>
<keyword id="KW-0903">Direct protein sequencing</keyword>
<keyword id="KW-0413">Isomerase</keyword>
<keyword id="KW-0460">Magnesium</keyword>
<keyword id="KW-0479">Metal-binding</keyword>
<keyword id="KW-0859">Xylose metabolism</keyword>